<sequence length="102" mass="11003">MAKGQSLQDPFLNALRRERVPVSIYLVNGIKLQGQIESFDQFVILLKNTVSQMVYKHAISTVVPSRPVSHHSNNAGGGSSNYHHGGSAQGSSAPQQDSDDAE</sequence>
<evidence type="ECO:0000255" key="1">
    <source>
        <dbReference type="HAMAP-Rule" id="MF_00436"/>
    </source>
</evidence>
<evidence type="ECO:0000255" key="2">
    <source>
        <dbReference type="PROSITE-ProRule" id="PRU01346"/>
    </source>
</evidence>
<evidence type="ECO:0000256" key="3">
    <source>
        <dbReference type="SAM" id="MobiDB-lite"/>
    </source>
</evidence>
<comment type="function">
    <text evidence="1">RNA chaperone that binds small regulatory RNA (sRNAs) and mRNAs to facilitate mRNA translational regulation in response to envelope stress, environmental stress and changes in metabolite concentrations. Also binds with high specificity to tRNAs.</text>
</comment>
<comment type="subunit">
    <text evidence="1">Homohexamer.</text>
</comment>
<comment type="similarity">
    <text evidence="1">Belongs to the Hfq family.</text>
</comment>
<gene>
    <name evidence="1" type="primary">hfq</name>
    <name type="ordered locus">KPK_5098</name>
</gene>
<keyword id="KW-0694">RNA-binding</keyword>
<keyword id="KW-0346">Stress response</keyword>
<reference key="1">
    <citation type="journal article" date="2008" name="PLoS Genet.">
        <title>Complete genome sequence of the N2-fixing broad host range endophyte Klebsiella pneumoniae 342 and virulence predictions verified in mice.</title>
        <authorList>
            <person name="Fouts D.E."/>
            <person name="Tyler H.L."/>
            <person name="DeBoy R.T."/>
            <person name="Daugherty S."/>
            <person name="Ren Q."/>
            <person name="Badger J.H."/>
            <person name="Durkin A.S."/>
            <person name="Huot H."/>
            <person name="Shrivastava S."/>
            <person name="Kothari S."/>
            <person name="Dodson R.J."/>
            <person name="Mohamoud Y."/>
            <person name="Khouri H."/>
            <person name="Roesch L.F.W."/>
            <person name="Krogfelt K.A."/>
            <person name="Struve C."/>
            <person name="Triplett E.W."/>
            <person name="Methe B.A."/>
        </authorList>
    </citation>
    <scope>NUCLEOTIDE SEQUENCE [LARGE SCALE GENOMIC DNA]</scope>
    <source>
        <strain>342</strain>
    </source>
</reference>
<protein>
    <recommendedName>
        <fullName evidence="1">RNA-binding protein Hfq</fullName>
    </recommendedName>
</protein>
<organism>
    <name type="scientific">Klebsiella pneumoniae (strain 342)</name>
    <dbReference type="NCBI Taxonomy" id="507522"/>
    <lineage>
        <taxon>Bacteria</taxon>
        <taxon>Pseudomonadati</taxon>
        <taxon>Pseudomonadota</taxon>
        <taxon>Gammaproteobacteria</taxon>
        <taxon>Enterobacterales</taxon>
        <taxon>Enterobacteriaceae</taxon>
        <taxon>Klebsiella/Raoultella group</taxon>
        <taxon>Klebsiella</taxon>
        <taxon>Klebsiella pneumoniae complex</taxon>
    </lineage>
</organism>
<feature type="chain" id="PRO_1000190334" description="RNA-binding protein Hfq">
    <location>
        <begin position="1"/>
        <end position="102"/>
    </location>
</feature>
<feature type="domain" description="Sm" evidence="2">
    <location>
        <begin position="9"/>
        <end position="68"/>
    </location>
</feature>
<feature type="region of interest" description="Disordered" evidence="3">
    <location>
        <begin position="63"/>
        <end position="102"/>
    </location>
</feature>
<feature type="compositionally biased region" description="Low complexity" evidence="3">
    <location>
        <begin position="70"/>
        <end position="86"/>
    </location>
</feature>
<accession>B5Y332</accession>
<name>HFQ_KLEP3</name>
<dbReference type="EMBL" id="CP000964">
    <property type="protein sequence ID" value="ACI11051.1"/>
    <property type="molecule type" value="Genomic_DNA"/>
</dbReference>
<dbReference type="SMR" id="B5Y332"/>
<dbReference type="KEGG" id="kpe:KPK_5098"/>
<dbReference type="HOGENOM" id="CLU_113688_2_1_6"/>
<dbReference type="Proteomes" id="UP000001734">
    <property type="component" value="Chromosome"/>
</dbReference>
<dbReference type="GO" id="GO:0005829">
    <property type="term" value="C:cytosol"/>
    <property type="evidence" value="ECO:0007669"/>
    <property type="project" value="TreeGrafter"/>
</dbReference>
<dbReference type="GO" id="GO:0003723">
    <property type="term" value="F:RNA binding"/>
    <property type="evidence" value="ECO:0007669"/>
    <property type="project" value="UniProtKB-UniRule"/>
</dbReference>
<dbReference type="GO" id="GO:0006355">
    <property type="term" value="P:regulation of DNA-templated transcription"/>
    <property type="evidence" value="ECO:0007669"/>
    <property type="project" value="InterPro"/>
</dbReference>
<dbReference type="GO" id="GO:0043487">
    <property type="term" value="P:regulation of RNA stability"/>
    <property type="evidence" value="ECO:0007669"/>
    <property type="project" value="TreeGrafter"/>
</dbReference>
<dbReference type="GO" id="GO:0045974">
    <property type="term" value="P:regulation of translation, ncRNA-mediated"/>
    <property type="evidence" value="ECO:0007669"/>
    <property type="project" value="TreeGrafter"/>
</dbReference>
<dbReference type="CDD" id="cd01716">
    <property type="entry name" value="Hfq"/>
    <property type="match status" value="1"/>
</dbReference>
<dbReference type="FunFam" id="2.30.30.100:FF:000001">
    <property type="entry name" value="RNA-binding protein Hfq"/>
    <property type="match status" value="1"/>
</dbReference>
<dbReference type="Gene3D" id="2.30.30.100">
    <property type="match status" value="1"/>
</dbReference>
<dbReference type="HAMAP" id="MF_00436">
    <property type="entry name" value="Hfq"/>
    <property type="match status" value="1"/>
</dbReference>
<dbReference type="InterPro" id="IPR005001">
    <property type="entry name" value="Hfq"/>
</dbReference>
<dbReference type="InterPro" id="IPR010920">
    <property type="entry name" value="LSM_dom_sf"/>
</dbReference>
<dbReference type="InterPro" id="IPR047575">
    <property type="entry name" value="Sm"/>
</dbReference>
<dbReference type="NCBIfam" id="TIGR02383">
    <property type="entry name" value="Hfq"/>
    <property type="match status" value="1"/>
</dbReference>
<dbReference type="NCBIfam" id="NF001602">
    <property type="entry name" value="PRK00395.1"/>
    <property type="match status" value="1"/>
</dbReference>
<dbReference type="PANTHER" id="PTHR34772">
    <property type="entry name" value="RNA-BINDING PROTEIN HFQ"/>
    <property type="match status" value="1"/>
</dbReference>
<dbReference type="PANTHER" id="PTHR34772:SF1">
    <property type="entry name" value="RNA-BINDING PROTEIN HFQ"/>
    <property type="match status" value="1"/>
</dbReference>
<dbReference type="Pfam" id="PF17209">
    <property type="entry name" value="Hfq"/>
    <property type="match status" value="1"/>
</dbReference>
<dbReference type="SUPFAM" id="SSF50182">
    <property type="entry name" value="Sm-like ribonucleoproteins"/>
    <property type="match status" value="1"/>
</dbReference>
<dbReference type="PROSITE" id="PS52002">
    <property type="entry name" value="SM"/>
    <property type="match status" value="1"/>
</dbReference>
<proteinExistence type="inferred from homology"/>